<protein>
    <recommendedName>
        <fullName>Periviscerokinin-2.1</fullName>
        <shortName>PVK-2.1</shortName>
    </recommendedName>
    <alternativeName>
        <fullName>Periviscerokinin-3</fullName>
        <shortName>PseFl-PVK-3</shortName>
    </alternativeName>
    <component>
        <recommendedName>
            <fullName>Periviscerokinin-2.2</fullName>
            <shortName>PVK-2.2</shortName>
        </recommendedName>
        <alternativeName>
            <fullName>Periviscerokinin-2</fullName>
            <shortName>PseFl-PVK-2</shortName>
        </alternativeName>
    </component>
</protein>
<name>PVK2_PSEFV</name>
<reference evidence="4" key="1">
    <citation type="journal article" date="2005" name="Peptides">
        <title>Peptidomics of neurohemal organs from species of the cockroach family Blattidae: how do neuropeptides of closely related species differ?</title>
        <authorList>
            <person name="Predel R."/>
            <person name="Gaede G."/>
        </authorList>
    </citation>
    <scope>PROTEIN SEQUENCE</scope>
    <scope>SUBCELLULAR LOCATION</scope>
    <scope>TISSUE SPECIFICITY</scope>
    <scope>MASS SPECTROMETRY</scope>
    <scope>AMIDATION AT VAL-12</scope>
    <source>
        <tissue evidence="2">Abdominal perisympathetic organs</tissue>
    </source>
</reference>
<reference key="2">
    <citation type="journal article" date="2009" name="BMC Evol. Biol.">
        <title>A proteomic approach for studying insect phylogeny: CAPA peptides of ancient insect taxa (Dictyoptera, Blattoptera) as a test case.</title>
        <authorList>
            <person name="Roth S."/>
            <person name="Fromm B."/>
            <person name="Gaede G."/>
            <person name="Predel R."/>
        </authorList>
    </citation>
    <scope>PROTEIN SEQUENCE</scope>
    <scope>AMIDATION AT VAL-12</scope>
    <source>
        <tissue>Abdominal perisympathetic organs</tissue>
    </source>
</reference>
<feature type="peptide" id="PRO_0000023629" description="Periviscerokinin-2.1">
    <location>
        <begin position="1"/>
        <end position="12"/>
    </location>
</feature>
<feature type="peptide" id="PRO_0000023630" description="Periviscerokinin-2.2">
    <location>
        <begin position="2"/>
        <end position="12"/>
    </location>
</feature>
<feature type="modified residue" description="Valine amide" evidence="2 3">
    <location>
        <position position="12"/>
    </location>
</feature>
<sequence>GGSSGLISMPRV</sequence>
<accession>P84377</accession>
<accession>P84432</accession>
<dbReference type="GO" id="GO:0005576">
    <property type="term" value="C:extracellular region"/>
    <property type="evidence" value="ECO:0007669"/>
    <property type="project" value="UniProtKB-SubCell"/>
</dbReference>
<dbReference type="GO" id="GO:0007218">
    <property type="term" value="P:neuropeptide signaling pathway"/>
    <property type="evidence" value="ECO:0007669"/>
    <property type="project" value="UniProtKB-KW"/>
</dbReference>
<dbReference type="InterPro" id="IPR013231">
    <property type="entry name" value="Periviscerokinin"/>
</dbReference>
<dbReference type="Pfam" id="PF08259">
    <property type="entry name" value="Periviscerokin"/>
    <property type="match status" value="1"/>
</dbReference>
<evidence type="ECO:0000255" key="1"/>
<evidence type="ECO:0000269" key="2">
    <source>
    </source>
</evidence>
<evidence type="ECO:0000269" key="3">
    <source>
    </source>
</evidence>
<evidence type="ECO:0000305" key="4"/>
<proteinExistence type="evidence at protein level"/>
<comment type="function">
    <text evidence="4">Mediates visceral muscle contractile activity (myotropic activity).</text>
</comment>
<comment type="subcellular location">
    <subcellularLocation>
        <location evidence="2">Secreted</location>
    </subcellularLocation>
</comment>
<comment type="tissue specificity">
    <text evidence="2">Abdominal perisympathetic organs.</text>
</comment>
<comment type="mass spectrometry">
    <molecule>Periviscerokinin-2.1</molecule>
</comment>
<comment type="mass spectrometry">
    <molecule>Periviscerokinin-2.2</molecule>
</comment>
<comment type="similarity">
    <text evidence="1">Belongs to the periviscerokinin family.</text>
</comment>
<keyword id="KW-0027">Amidation</keyword>
<keyword id="KW-0903">Direct protein sequencing</keyword>
<keyword id="KW-0527">Neuropeptide</keyword>
<keyword id="KW-0964">Secreted</keyword>
<organism>
    <name type="scientific">Pseudoderopeltis flavescens</name>
    <name type="common">Cockroach</name>
    <dbReference type="NCBI Taxonomy" id="303916"/>
    <lineage>
        <taxon>Eukaryota</taxon>
        <taxon>Metazoa</taxon>
        <taxon>Ecdysozoa</taxon>
        <taxon>Arthropoda</taxon>
        <taxon>Hexapoda</taxon>
        <taxon>Insecta</taxon>
        <taxon>Pterygota</taxon>
        <taxon>Neoptera</taxon>
        <taxon>Polyneoptera</taxon>
        <taxon>Dictyoptera</taxon>
        <taxon>Blattodea</taxon>
        <taxon>Blattoidea</taxon>
        <taxon>Blattidae</taxon>
        <taxon>Blattinae</taxon>
        <taxon>Pseudoderopeltis</taxon>
    </lineage>
</organism>